<accession>P16930</accession>
<accession>B2R9X1</accession>
<accession>D3DW95</accession>
<accession>Q53XA7</accession>
<name>FAAA_HUMAN</name>
<feature type="initiator methionine" description="Removed" evidence="19 23">
    <location>
        <position position="1"/>
    </location>
</feature>
<feature type="chain" id="PRO_0000156825" description="Fumarylacetoacetase">
    <location>
        <begin position="2"/>
        <end position="419"/>
    </location>
</feature>
<feature type="active site" description="Proton acceptor" evidence="21">
    <location>
        <position position="133"/>
    </location>
</feature>
<feature type="binding site" evidence="1">
    <location>
        <position position="126"/>
    </location>
    <ligand>
        <name>Ca(2+)</name>
        <dbReference type="ChEBI" id="CHEBI:29108"/>
    </ligand>
</feature>
<feature type="binding site" evidence="1">
    <location>
        <position position="128"/>
    </location>
    <ligand>
        <name>substrate</name>
    </ligand>
</feature>
<feature type="binding site" evidence="1">
    <location>
        <position position="142"/>
    </location>
    <ligand>
        <name>substrate</name>
    </ligand>
</feature>
<feature type="binding site" evidence="1">
    <location>
        <position position="199"/>
    </location>
    <ligand>
        <name>Ca(2+)</name>
        <dbReference type="ChEBI" id="CHEBI:29108"/>
    </ligand>
</feature>
<feature type="binding site" evidence="1">
    <location>
        <position position="201"/>
    </location>
    <ligand>
        <name>Ca(2+)</name>
        <dbReference type="ChEBI" id="CHEBI:29108"/>
    </ligand>
</feature>
<feature type="binding site" evidence="1">
    <location>
        <position position="233"/>
    </location>
    <ligand>
        <name>Ca(2+)</name>
        <dbReference type="ChEBI" id="CHEBI:29108"/>
    </ligand>
</feature>
<feature type="binding site" evidence="1">
    <location>
        <position position="233"/>
    </location>
    <ligand>
        <name>Mg(2+)</name>
        <dbReference type="ChEBI" id="CHEBI:18420"/>
    </ligand>
</feature>
<feature type="binding site" evidence="1">
    <location>
        <position position="240"/>
    </location>
    <ligand>
        <name>substrate</name>
    </ligand>
</feature>
<feature type="binding site" evidence="1">
    <location>
        <position position="244"/>
    </location>
    <ligand>
        <name>substrate</name>
    </ligand>
</feature>
<feature type="binding site" evidence="1">
    <location>
        <position position="253"/>
    </location>
    <ligand>
        <name>Mg(2+)</name>
        <dbReference type="ChEBI" id="CHEBI:18420"/>
    </ligand>
</feature>
<feature type="binding site" evidence="1">
    <location>
        <position position="257"/>
    </location>
    <ligand>
        <name>Mg(2+)</name>
        <dbReference type="ChEBI" id="CHEBI:18420"/>
    </ligand>
</feature>
<feature type="binding site" evidence="1">
    <location>
        <position position="350"/>
    </location>
    <ligand>
        <name>substrate</name>
    </ligand>
</feature>
<feature type="modified residue" description="N-acetylserine" evidence="19 23">
    <location>
        <position position="2"/>
    </location>
</feature>
<feature type="modified residue" description="Phosphoserine" evidence="1">
    <location>
        <position position="92"/>
    </location>
</feature>
<feature type="modified residue" description="Phosphoserine" evidence="22">
    <location>
        <position position="309"/>
    </location>
</feature>
<feature type="modified residue" description="Phosphotyrosine" evidence="22">
    <location>
        <position position="395"/>
    </location>
</feature>
<feature type="splice variant" id="VSP_055491" description="In isoform 2." evidence="20">
    <location>
        <begin position="1"/>
        <end position="70"/>
    </location>
</feature>
<feature type="sequence variant" id="VAR_005205" description="In TYRSN1; loss of activity; dbSNP:rs121965073." evidence="3 5">
    <original>N</original>
    <variation>I</variation>
    <location>
        <position position="16"/>
    </location>
</feature>
<feature type="sequence variant" id="VAR_065454" description="In TYRSN1; atypical mild phenotype." evidence="6">
    <original>A</original>
    <variation>T</variation>
    <location>
        <position position="35"/>
    </location>
</feature>
<feature type="sequence variant" id="VAR_005206" description="In TYRSN1; loss of activity." evidence="3">
    <original>F</original>
    <variation>C</variation>
    <location>
        <position position="62"/>
    </location>
</feature>
<feature type="sequence variant" id="VAR_005207" description="In TYRSN1; dbSNP:rs80338894." evidence="17">
    <original>Q</original>
    <variation>H</variation>
    <location>
        <position position="64"/>
    </location>
</feature>
<feature type="sequence variant" id="VAR_005208" description="In TYRSN1; loss of activity; dbSNP:rs121965074." evidence="3 12 14">
    <original>A</original>
    <variation>D</variation>
    <location>
        <position position="134"/>
    </location>
</feature>
<feature type="sequence variant" id="VAR_005209" description="In TYRSN1." evidence="18">
    <original>G</original>
    <variation>D</variation>
    <location>
        <position position="158"/>
    </location>
</feature>
<feature type="sequence variant" id="VAR_005210" description="In TYRSN1; dbSNP:rs778387055." evidence="13">
    <original>V</original>
    <variation>G</variation>
    <location>
        <position position="166"/>
    </location>
</feature>
<feature type="sequence variant" id="VAR_005211" description="In TYRSN1; loss of activity." evidence="3 15">
    <original>C</original>
    <variation>R</variation>
    <location>
        <position position="193"/>
    </location>
</feature>
<feature type="sequence variant" id="VAR_005212" description="In TYRSN1; dbSNP:rs754196530." evidence="16">
    <original>G</original>
    <variation>D</variation>
    <location>
        <position position="207"/>
    </location>
</feature>
<feature type="sequence variant" id="VAR_005213" description="In TYRSN1; loss of activity; dbSNP:rs80338897." evidence="3 10">
    <original>D</original>
    <variation>V</variation>
    <location>
        <position position="233"/>
    </location>
</feature>
<feature type="sequence variant" id="VAR_005214" description="In TYRSN1; loss of activity; dbSNP:rs1555441595." evidence="3 8">
    <original>W</original>
    <variation>G</variation>
    <location>
        <position position="234"/>
    </location>
</feature>
<feature type="sequence variant" id="VAR_005215" description="In TYRSN1." evidence="16">
    <original>P</original>
    <variation>T</variation>
    <location>
        <position position="249"/>
    </location>
</feature>
<feature type="sequence variant" id="VAR_005216" description="In TYRSN1; dbSNP:rs80338898." evidence="18">
    <original>P</original>
    <variation>L</variation>
    <location>
        <position position="261"/>
    </location>
</feature>
<feature type="sequence variant" id="VAR_065455" description="In TYRSN1; may affect splicing resulting in skipping of exon 8 alone or together with exon 9; lower activity as compared to wild type; dbSNP:rs121965078." evidence="2 3 4">
    <original>Q</original>
    <variation>R</variation>
    <location>
        <position position="279"/>
    </location>
</feature>
<feature type="sequence variant" id="VAR_005217" description="In TYRSN1; dbSNP:rs370634385." evidence="16">
    <original>T</original>
    <variation>P</variation>
    <location>
        <position position="294"/>
    </location>
</feature>
<feature type="sequence variant" id="VAR_005218" description="In TYRSN1; dbSNP:rs80338900." evidence="9">
    <original>G</original>
    <variation>S</variation>
    <location>
        <position position="337"/>
    </location>
</feature>
<feature type="sequence variant" id="VAR_005219" description="Does not cause a clinically relevant phenotype; results in lower enzyme activity; dbSNP:rs11555096." evidence="3 7 11">
    <original>R</original>
    <variation>W</variation>
    <location>
        <position position="341"/>
    </location>
</feature>
<feature type="sequence variant" id="VAR_005220" description="In TYRSN1; loss of activity; dbSNP:rs779040832." evidence="12">
    <original>P</original>
    <variation>L</variation>
    <location>
        <position position="342"/>
    </location>
</feature>
<feature type="sequence variant" id="VAR_005221" description="In TYRSN1." evidence="18">
    <location>
        <position position="366"/>
    </location>
</feature>
<feature type="sequence variant" id="VAR_005222" description="In TYRSN1." evidence="15">
    <original>G</original>
    <variation>V</variation>
    <location>
        <position position="369"/>
    </location>
</feature>
<feature type="sequence variant" id="VAR_005223" description="In TYRSN1; loss of activity; dbSNP:rs121965077." evidence="9">
    <original>R</original>
    <variation>G</variation>
    <location>
        <position position="381"/>
    </location>
</feature>
<feature type="sequence variant" id="VAR_005224" description="In TYRSN1; requires 2 nucleotide substitutions." evidence="18">
    <original>F</original>
    <variation>H</variation>
    <location>
        <position position="405"/>
    </location>
</feature>
<evidence type="ECO:0000250" key="1">
    <source>
        <dbReference type="UniProtKB" id="P35505"/>
    </source>
</evidence>
<evidence type="ECO:0000269" key="2">
    <source>
    </source>
</evidence>
<evidence type="ECO:0000269" key="3">
    <source>
    </source>
</evidence>
<evidence type="ECO:0000269" key="4">
    <source>
    </source>
</evidence>
<evidence type="ECO:0000269" key="5">
    <source>
    </source>
</evidence>
<evidence type="ECO:0000269" key="6">
    <source>
    </source>
</evidence>
<evidence type="ECO:0000269" key="7">
    <source>
    </source>
</evidence>
<evidence type="ECO:0000269" key="8">
    <source>
    </source>
</evidence>
<evidence type="ECO:0000269" key="9">
    <source>
    </source>
</evidence>
<evidence type="ECO:0000269" key="10">
    <source>
    </source>
</evidence>
<evidence type="ECO:0000269" key="11">
    <source>
    </source>
</evidence>
<evidence type="ECO:0000269" key="12">
    <source>
    </source>
</evidence>
<evidence type="ECO:0000269" key="13">
    <source>
    </source>
</evidence>
<evidence type="ECO:0000269" key="14">
    <source>
    </source>
</evidence>
<evidence type="ECO:0000269" key="15">
    <source>
    </source>
</evidence>
<evidence type="ECO:0000269" key="16">
    <source>
    </source>
</evidence>
<evidence type="ECO:0000269" key="17">
    <source>
    </source>
</evidence>
<evidence type="ECO:0000269" key="18">
    <source>
    </source>
</evidence>
<evidence type="ECO:0000269" key="19">
    <source ref="8"/>
</evidence>
<evidence type="ECO:0000303" key="20">
    <source>
    </source>
</evidence>
<evidence type="ECO:0000305" key="21"/>
<evidence type="ECO:0007744" key="22">
    <source>
    </source>
</evidence>
<evidence type="ECO:0007744" key="23">
    <source>
    </source>
</evidence>
<organism>
    <name type="scientific">Homo sapiens</name>
    <name type="common">Human</name>
    <dbReference type="NCBI Taxonomy" id="9606"/>
    <lineage>
        <taxon>Eukaryota</taxon>
        <taxon>Metazoa</taxon>
        <taxon>Chordata</taxon>
        <taxon>Craniata</taxon>
        <taxon>Vertebrata</taxon>
        <taxon>Euteleostomi</taxon>
        <taxon>Mammalia</taxon>
        <taxon>Eutheria</taxon>
        <taxon>Euarchontoglires</taxon>
        <taxon>Primates</taxon>
        <taxon>Haplorrhini</taxon>
        <taxon>Catarrhini</taxon>
        <taxon>Hominidae</taxon>
        <taxon>Homo</taxon>
    </lineage>
</organism>
<proteinExistence type="evidence at protein level"/>
<gene>
    <name type="primary">FAH</name>
</gene>
<reference key="1">
    <citation type="journal article" date="1991" name="Am. J. Hum. Genet.">
        <title>Cloning and expression of the cDNA encoding human fumarylacetoacetate hydrolase, the enzyme deficient in hereditary tyrosinemia: assignment of the gene to chromosome 15.</title>
        <authorList>
            <person name="Phaneuf D."/>
            <person name="Labelle Y."/>
            <person name="Berube D."/>
            <person name="Arden K."/>
            <person name="Cavenee W."/>
            <person name="Gagne R."/>
            <person name="Tanguay R.M."/>
        </authorList>
    </citation>
    <scope>NUCLEOTIDE SEQUENCE [MRNA] (ISOFORM 1)</scope>
</reference>
<reference key="2">
    <citation type="submission" date="2003-05" db="EMBL/GenBank/DDBJ databases">
        <title>Cloning of human full-length CDSs in BD Creator(TM) system donor vector.</title>
        <authorList>
            <person name="Kalnine N."/>
            <person name="Chen X."/>
            <person name="Rolfs A."/>
            <person name="Halleck A."/>
            <person name="Hines L."/>
            <person name="Eisenstein S."/>
            <person name="Koundinya M."/>
            <person name="Raphael J."/>
            <person name="Moreira D."/>
            <person name="Kelley T."/>
            <person name="LaBaer J."/>
            <person name="Lin Y."/>
            <person name="Phelan M."/>
            <person name="Farmer A."/>
        </authorList>
    </citation>
    <scope>NUCLEOTIDE SEQUENCE [LARGE SCALE MRNA] (ISOFORM 1)</scope>
</reference>
<reference key="3">
    <citation type="journal article" date="2004" name="Nat. Genet.">
        <title>Complete sequencing and characterization of 21,243 full-length human cDNAs.</title>
        <authorList>
            <person name="Ota T."/>
            <person name="Suzuki Y."/>
            <person name="Nishikawa T."/>
            <person name="Otsuki T."/>
            <person name="Sugiyama T."/>
            <person name="Irie R."/>
            <person name="Wakamatsu A."/>
            <person name="Hayashi K."/>
            <person name="Sato H."/>
            <person name="Nagai K."/>
            <person name="Kimura K."/>
            <person name="Makita H."/>
            <person name="Sekine M."/>
            <person name="Obayashi M."/>
            <person name="Nishi T."/>
            <person name="Shibahara T."/>
            <person name="Tanaka T."/>
            <person name="Ishii S."/>
            <person name="Yamamoto J."/>
            <person name="Saito K."/>
            <person name="Kawai Y."/>
            <person name="Isono Y."/>
            <person name="Nakamura Y."/>
            <person name="Nagahari K."/>
            <person name="Murakami K."/>
            <person name="Yasuda T."/>
            <person name="Iwayanagi T."/>
            <person name="Wagatsuma M."/>
            <person name="Shiratori A."/>
            <person name="Sudo H."/>
            <person name="Hosoiri T."/>
            <person name="Kaku Y."/>
            <person name="Kodaira H."/>
            <person name="Kondo H."/>
            <person name="Sugawara M."/>
            <person name="Takahashi M."/>
            <person name="Kanda K."/>
            <person name="Yokoi T."/>
            <person name="Furuya T."/>
            <person name="Kikkawa E."/>
            <person name="Omura Y."/>
            <person name="Abe K."/>
            <person name="Kamihara K."/>
            <person name="Katsuta N."/>
            <person name="Sato K."/>
            <person name="Tanikawa M."/>
            <person name="Yamazaki M."/>
            <person name="Ninomiya K."/>
            <person name="Ishibashi T."/>
            <person name="Yamashita H."/>
            <person name="Murakawa K."/>
            <person name="Fujimori K."/>
            <person name="Tanai H."/>
            <person name="Kimata M."/>
            <person name="Watanabe M."/>
            <person name="Hiraoka S."/>
            <person name="Chiba Y."/>
            <person name="Ishida S."/>
            <person name="Ono Y."/>
            <person name="Takiguchi S."/>
            <person name="Watanabe S."/>
            <person name="Yosida M."/>
            <person name="Hotuta T."/>
            <person name="Kusano J."/>
            <person name="Kanehori K."/>
            <person name="Takahashi-Fujii A."/>
            <person name="Hara H."/>
            <person name="Tanase T.-O."/>
            <person name="Nomura Y."/>
            <person name="Togiya S."/>
            <person name="Komai F."/>
            <person name="Hara R."/>
            <person name="Takeuchi K."/>
            <person name="Arita M."/>
            <person name="Imose N."/>
            <person name="Musashino K."/>
            <person name="Yuuki H."/>
            <person name="Oshima A."/>
            <person name="Sasaki N."/>
            <person name="Aotsuka S."/>
            <person name="Yoshikawa Y."/>
            <person name="Matsunawa H."/>
            <person name="Ichihara T."/>
            <person name="Shiohata N."/>
            <person name="Sano S."/>
            <person name="Moriya S."/>
            <person name="Momiyama H."/>
            <person name="Satoh N."/>
            <person name="Takami S."/>
            <person name="Terashima Y."/>
            <person name="Suzuki O."/>
            <person name="Nakagawa S."/>
            <person name="Senoh A."/>
            <person name="Mizoguchi H."/>
            <person name="Goto Y."/>
            <person name="Shimizu F."/>
            <person name="Wakebe H."/>
            <person name="Hishigaki H."/>
            <person name="Watanabe T."/>
            <person name="Sugiyama A."/>
            <person name="Takemoto M."/>
            <person name="Kawakami B."/>
            <person name="Yamazaki M."/>
            <person name="Watanabe K."/>
            <person name="Kumagai A."/>
            <person name="Itakura S."/>
            <person name="Fukuzumi Y."/>
            <person name="Fujimori Y."/>
            <person name="Komiyama M."/>
            <person name="Tashiro H."/>
            <person name="Tanigami A."/>
            <person name="Fujiwara T."/>
            <person name="Ono T."/>
            <person name="Yamada K."/>
            <person name="Fujii Y."/>
            <person name="Ozaki K."/>
            <person name="Hirao M."/>
            <person name="Ohmori Y."/>
            <person name="Kawabata A."/>
            <person name="Hikiji T."/>
            <person name="Kobatake N."/>
            <person name="Inagaki H."/>
            <person name="Ikema Y."/>
            <person name="Okamoto S."/>
            <person name="Okitani R."/>
            <person name="Kawakami T."/>
            <person name="Noguchi S."/>
            <person name="Itoh T."/>
            <person name="Shigeta K."/>
            <person name="Senba T."/>
            <person name="Matsumura K."/>
            <person name="Nakajima Y."/>
            <person name="Mizuno T."/>
            <person name="Morinaga M."/>
            <person name="Sasaki M."/>
            <person name="Togashi T."/>
            <person name="Oyama M."/>
            <person name="Hata H."/>
            <person name="Watanabe M."/>
            <person name="Komatsu T."/>
            <person name="Mizushima-Sugano J."/>
            <person name="Satoh T."/>
            <person name="Shirai Y."/>
            <person name="Takahashi Y."/>
            <person name="Nakagawa K."/>
            <person name="Okumura K."/>
            <person name="Nagase T."/>
            <person name="Nomura N."/>
            <person name="Kikuchi H."/>
            <person name="Masuho Y."/>
            <person name="Yamashita R."/>
            <person name="Nakai K."/>
            <person name="Yada T."/>
            <person name="Nakamura Y."/>
            <person name="Ohara O."/>
            <person name="Isogai T."/>
            <person name="Sugano S."/>
        </authorList>
    </citation>
    <scope>NUCLEOTIDE SEQUENCE [LARGE SCALE MRNA] (ISOFORM 1)</scope>
</reference>
<reference key="4">
    <citation type="journal article" date="2007" name="BMC Genomics">
        <title>The full-ORF clone resource of the German cDNA consortium.</title>
        <authorList>
            <person name="Bechtel S."/>
            <person name="Rosenfelder H."/>
            <person name="Duda A."/>
            <person name="Schmidt C.P."/>
            <person name="Ernst U."/>
            <person name="Wellenreuther R."/>
            <person name="Mehrle A."/>
            <person name="Schuster C."/>
            <person name="Bahr A."/>
            <person name="Bloecker H."/>
            <person name="Heubner D."/>
            <person name="Hoerlein A."/>
            <person name="Michel G."/>
            <person name="Wedler H."/>
            <person name="Koehrer K."/>
            <person name="Ottenwaelder B."/>
            <person name="Poustka A."/>
            <person name="Wiemann S."/>
            <person name="Schupp I."/>
        </authorList>
    </citation>
    <scope>NUCLEOTIDE SEQUENCE [LARGE SCALE MRNA] (ISOFORM 2)</scope>
    <source>
        <tissue>Small intestine</tissue>
    </source>
</reference>
<reference key="5">
    <citation type="journal article" date="2006" name="Nature">
        <title>Analysis of the DNA sequence and duplication history of human chromosome 15.</title>
        <authorList>
            <person name="Zody M.C."/>
            <person name="Garber M."/>
            <person name="Sharpe T."/>
            <person name="Young S.K."/>
            <person name="Rowen L."/>
            <person name="O'Neill K."/>
            <person name="Whittaker C.A."/>
            <person name="Kamal M."/>
            <person name="Chang J.L."/>
            <person name="Cuomo C.A."/>
            <person name="Dewar K."/>
            <person name="FitzGerald M.G."/>
            <person name="Kodira C.D."/>
            <person name="Madan A."/>
            <person name="Qin S."/>
            <person name="Yang X."/>
            <person name="Abbasi N."/>
            <person name="Abouelleil A."/>
            <person name="Arachchi H.M."/>
            <person name="Baradarani L."/>
            <person name="Birditt B."/>
            <person name="Bloom S."/>
            <person name="Bloom T."/>
            <person name="Borowsky M.L."/>
            <person name="Burke J."/>
            <person name="Butler J."/>
            <person name="Cook A."/>
            <person name="DeArellano K."/>
            <person name="DeCaprio D."/>
            <person name="Dorris L. III"/>
            <person name="Dors M."/>
            <person name="Eichler E.E."/>
            <person name="Engels R."/>
            <person name="Fahey J."/>
            <person name="Fleetwood P."/>
            <person name="Friedman C."/>
            <person name="Gearin G."/>
            <person name="Hall J.L."/>
            <person name="Hensley G."/>
            <person name="Johnson E."/>
            <person name="Jones C."/>
            <person name="Kamat A."/>
            <person name="Kaur A."/>
            <person name="Locke D.P."/>
            <person name="Madan A."/>
            <person name="Munson G."/>
            <person name="Jaffe D.B."/>
            <person name="Lui A."/>
            <person name="Macdonald P."/>
            <person name="Mauceli E."/>
            <person name="Naylor J.W."/>
            <person name="Nesbitt R."/>
            <person name="Nicol R."/>
            <person name="O'Leary S.B."/>
            <person name="Ratcliffe A."/>
            <person name="Rounsley S."/>
            <person name="She X."/>
            <person name="Sneddon K.M.B."/>
            <person name="Stewart S."/>
            <person name="Sougnez C."/>
            <person name="Stone S.M."/>
            <person name="Topham K."/>
            <person name="Vincent D."/>
            <person name="Wang S."/>
            <person name="Zimmer A.R."/>
            <person name="Birren B.W."/>
            <person name="Hood L."/>
            <person name="Lander E.S."/>
            <person name="Nusbaum C."/>
        </authorList>
    </citation>
    <scope>NUCLEOTIDE SEQUENCE [LARGE SCALE GENOMIC DNA]</scope>
</reference>
<reference key="6">
    <citation type="submission" date="2005-09" db="EMBL/GenBank/DDBJ databases">
        <authorList>
            <person name="Mural R.J."/>
            <person name="Istrail S."/>
            <person name="Sutton G.G."/>
            <person name="Florea L."/>
            <person name="Halpern A.L."/>
            <person name="Mobarry C.M."/>
            <person name="Lippert R."/>
            <person name="Walenz B."/>
            <person name="Shatkay H."/>
            <person name="Dew I."/>
            <person name="Miller J.R."/>
            <person name="Flanigan M.J."/>
            <person name="Edwards N.J."/>
            <person name="Bolanos R."/>
            <person name="Fasulo D."/>
            <person name="Halldorsson B.V."/>
            <person name="Hannenhalli S."/>
            <person name="Turner R."/>
            <person name="Yooseph S."/>
            <person name="Lu F."/>
            <person name="Nusskern D.R."/>
            <person name="Shue B.C."/>
            <person name="Zheng X.H."/>
            <person name="Zhong F."/>
            <person name="Delcher A.L."/>
            <person name="Huson D.H."/>
            <person name="Kravitz S.A."/>
            <person name="Mouchard L."/>
            <person name="Reinert K."/>
            <person name="Remington K.A."/>
            <person name="Clark A.G."/>
            <person name="Waterman M.S."/>
            <person name="Eichler E.E."/>
            <person name="Adams M.D."/>
            <person name="Hunkapiller M.W."/>
            <person name="Myers E.W."/>
            <person name="Venter J.C."/>
        </authorList>
    </citation>
    <scope>NUCLEOTIDE SEQUENCE [LARGE SCALE GENOMIC DNA]</scope>
</reference>
<reference key="7">
    <citation type="journal article" date="2004" name="Genome Res.">
        <title>The status, quality, and expansion of the NIH full-length cDNA project: the Mammalian Gene Collection (MGC).</title>
        <authorList>
            <consortium name="The MGC Project Team"/>
        </authorList>
    </citation>
    <scope>NUCLEOTIDE SEQUENCE [LARGE SCALE MRNA] (ISOFORM 1)</scope>
    <source>
        <tissue>Placenta</tissue>
    </source>
</reference>
<reference key="8">
    <citation type="submission" date="2010-01" db="UniProtKB">
        <authorList>
            <person name="Bienvenut W.V."/>
        </authorList>
    </citation>
    <scope>PROTEIN SEQUENCE OF 2-25; 32-47; 83-95 AND 195-211</scope>
    <scope>CLEAVAGE OF INITIATOR METHIONINE</scope>
    <scope>ACETYLATION AT SER-2</scope>
    <scope>IDENTIFICATION BY MASS SPECTROMETRY</scope>
    <source>
        <tissue>Ovarian carcinoma</tissue>
    </source>
</reference>
<reference key="9">
    <citation type="journal article" date="1990" name="Nucleic Acids Res.">
        <title>Nucleotide sequence of cDNA encoding human fumarylacetoacetase.</title>
        <authorList>
            <person name="Agsteribbe E."/>
            <person name="van Faassen H."/>
            <person name="Hartog M.V."/>
            <person name="Reversma T."/>
            <person name="Taanman J.-W."/>
            <person name="Pannekoek H."/>
            <person name="Evers R.F."/>
            <person name="Welling G.M."/>
            <person name="Berger R."/>
        </authorList>
    </citation>
    <scope>NUCLEOTIDE SEQUENCE [MRNA] OF 71-419 (ISOFORM 1)</scope>
    <source>
        <tissue>Liver</tissue>
    </source>
</reference>
<reference key="10">
    <citation type="journal article" date="2011" name="BMC Syst. Biol.">
        <title>Initial characterization of the human central proteome.</title>
        <authorList>
            <person name="Burkard T.R."/>
            <person name="Planyavsky M."/>
            <person name="Kaupe I."/>
            <person name="Breitwieser F.P."/>
            <person name="Buerckstuemmer T."/>
            <person name="Bennett K.L."/>
            <person name="Superti-Furga G."/>
            <person name="Colinge J."/>
        </authorList>
    </citation>
    <scope>IDENTIFICATION BY MASS SPECTROMETRY [LARGE SCALE ANALYSIS]</scope>
</reference>
<reference key="11">
    <citation type="journal article" date="2014" name="J. Proteomics">
        <title>An enzyme assisted RP-RPLC approach for in-depth analysis of human liver phosphoproteome.</title>
        <authorList>
            <person name="Bian Y."/>
            <person name="Song C."/>
            <person name="Cheng K."/>
            <person name="Dong M."/>
            <person name="Wang F."/>
            <person name="Huang J."/>
            <person name="Sun D."/>
            <person name="Wang L."/>
            <person name="Ye M."/>
            <person name="Zou H."/>
        </authorList>
    </citation>
    <scope>PHOSPHORYLATION [LARGE SCALE ANALYSIS] AT SER-309 AND TYR-395</scope>
    <scope>IDENTIFICATION BY MASS SPECTROMETRY [LARGE SCALE ANALYSIS]</scope>
    <source>
        <tissue>Liver</tissue>
    </source>
</reference>
<reference key="12">
    <citation type="journal article" date="2015" name="Proteomics">
        <title>N-terminome analysis of the human mitochondrial proteome.</title>
        <authorList>
            <person name="Vaca Jacome A.S."/>
            <person name="Rabilloud T."/>
            <person name="Schaeffer-Reiss C."/>
            <person name="Rompais M."/>
            <person name="Ayoub D."/>
            <person name="Lane L."/>
            <person name="Bairoch A."/>
            <person name="Van Dorsselaer A."/>
            <person name="Carapito C."/>
        </authorList>
    </citation>
    <scope>ACETYLATION [LARGE SCALE ANALYSIS] AT SER-2</scope>
    <scope>CLEAVAGE OF INITIATOR METHIONINE [LARGE SCALE ANALYSIS]</scope>
    <scope>IDENTIFICATION BY MASS SPECTROMETRY [LARGE SCALE ANALYSIS]</scope>
</reference>
<reference key="13">
    <citation type="journal article" date="1992" name="J. Clin. Invest.">
        <title>Type 1 hereditary tyrosinemia. Evidence for molecular heterogeneity and identification of a causal mutation in a French Canadian patient.</title>
        <authorList>
            <person name="Phaneuf D."/>
            <person name="Lambert M."/>
            <person name="Laframboise R."/>
            <person name="Mitchell G."/>
            <person name="Lettre F."/>
            <person name="Tanguay R.M."/>
        </authorList>
    </citation>
    <scope>VARIANT TYRSN1 ILE-16</scope>
</reference>
<reference key="14">
    <citation type="journal article" date="1993" name="Hum. Mol. Genet.">
        <title>Characterization of the human fumarylacetoacetate hydrolase gene and identification of a missense mutation abolishing enzymatic activity.</title>
        <authorList>
            <person name="Labelle Y."/>
            <person name="Phaneuf D."/>
            <person name="Leclerc B."/>
            <person name="Tanguay R.M."/>
        </authorList>
    </citation>
    <scope>VARIANT TYRSN1 ASP-134</scope>
</reference>
<reference key="15">
    <citation type="journal article" date="1993" name="Hum. Mutat.">
        <title>Mutations of the fumarylacetoacetate hydrolase gene in four patients with tyrosinemia, type I.</title>
        <authorList>
            <person name="Grompe M."/>
            <person name="Al-Dhalimy M."/>
        </authorList>
    </citation>
    <scope>VARIANT TYRSN1 GLY-166</scope>
</reference>
<reference key="16">
    <citation type="journal article" date="1994" name="Am. J. Hum. Genet.">
        <title>Novel splice, missense, and nonsense mutations in the fumarylacetoacetase gene causing tyrosinemia type 1.</title>
        <authorList>
            <person name="Rootwelt H."/>
            <person name="Berger R."/>
            <person name="Gray G."/>
            <person name="Kelly D.A."/>
            <person name="Coskun T."/>
            <person name="Kvittingen E.A."/>
        </authorList>
    </citation>
    <scope>VARIANT TYRSN1 VAL-233</scope>
</reference>
<reference key="17">
    <citation type="journal article" date="1994" name="Am. J. Hum. Genet.">
        <title>Identification of a frequent pseudodeficiency mutation in the fumarylacetoacetase gene, with implications for diagnosis of tyrosinemia type I.</title>
        <authorList>
            <person name="Rootwelt H."/>
            <person name="Brodtkorb E."/>
            <person name="Kvittingen E.A."/>
        </authorList>
    </citation>
    <scope>INVOLVEMENT IN TYRSN1</scope>
    <scope>VARIANT TRP-341</scope>
</reference>
<reference key="18">
    <citation type="journal article" date="1994" name="Hum. Genet.">
        <title>Two missense mutations causing tyrosinemia type 1 with presence and absence of immunoreactive fumarylacetoacetase.</title>
        <authorList>
            <person name="Rootwelt H."/>
            <person name="Chou J."/>
            <person name="Gahl W.A."/>
            <person name="Berger R."/>
            <person name="Coskun T."/>
            <person name="Brodtkorb E."/>
            <person name="Kvittingen E.A."/>
        </authorList>
    </citation>
    <scope>VARIANTS TYRSN1 ASP-134 AND LEU-342</scope>
</reference>
<reference key="19">
    <citation type="journal article" date="1995" name="Hum. Mol. Genet.">
        <title>Two novel mutations involved in hereditary tyrosinemia type I.</title>
        <authorList>
            <person name="St Louis M."/>
            <person name="Poudrier J."/>
            <person name="Phaneuf D."/>
            <person name="Leclerc B."/>
            <person name="Laframboise R."/>
            <person name="Tanguay R.M."/>
        </authorList>
    </citation>
    <scope>VARIANTS TYRSN1 SER-337 AND GLY-381</scope>
</reference>
<reference key="20">
    <citation type="journal article" date="1995" name="Hum. Mutat.">
        <title>Heterozygosity for an exon 12 splicing mutation and a W234G missense mutation in an American child with chronic tyrosinemia type 1.</title>
        <authorList>
            <person name="Hahn S.H."/>
            <person name="Krasnewich D."/>
            <person name="Brantly M."/>
            <person name="Kvittingen E.A."/>
            <person name="Gahl W.A."/>
        </authorList>
    </citation>
    <scope>VARIANT TYRSN1 GLY-234</scope>
</reference>
<reference key="21">
    <citation type="journal article" date="1996" name="Hum. Genet.">
        <title>Hereditary tyrosinemia type 1: novel missense, nonsense and splice consensus mutations in the human fumarylacetoacetate hydrolase gene; variability of the genotype-phenotype relationship.</title>
        <authorList>
            <person name="Ploos van Amstel J.K."/>
            <person name="Bergman A.J.I.W."/>
            <person name="van Beurden E.A.C.M."/>
            <person name="Roijers J.F.M."/>
            <person name="Peelen T."/>
            <person name="van den Berg I.E.T."/>
            <person name="Poll-The B.T."/>
            <person name="Kvittingen E.A."/>
            <person name="Berger R."/>
        </authorList>
    </citation>
    <scope>VARIANTS TYRSN1 ARG-193 AND VAL-369</scope>
</reference>
<reference key="22">
    <citation type="journal article" date="1996" name="Hum. Mutat.">
        <title>Six novel mutations in the fumarylacetoacetate hydrolase gene of patients with hereditary tyrosinemia type I.</title>
        <authorList>
            <person name="Timmers C."/>
            <person name="Grompe M."/>
        </authorList>
    </citation>
    <scope>VARIANTS TYRSN1 ASP-207; THR-249 AND PRO-294</scope>
</reference>
<reference key="23">
    <citation type="journal article" date="1997" name="Hum. Mutat.">
        <title>Mutations in the fumarylacetoacetate hydrolase gene causing hereditary tyrosinemia type I: overview.</title>
        <authorList>
            <person name="St Louis M."/>
            <person name="Tanguay R.M."/>
        </authorList>
    </citation>
    <scope>VARIANT TYRSN1 HIS-64</scope>
</reference>
<reference key="24">
    <citation type="journal article" date="1998" name="Hum. Mutat.">
        <title>Spectrum of mutations in the fumarylacetoacetate hydrolase gene of tyrosinemia type 1 patients in northwestern Europe and Mediterranean countries.</title>
        <authorList>
            <person name="Bergman A.J.I.W."/>
            <person name="van den Berg I.E.T."/>
            <person name="Brink W."/>
            <person name="Poll-The B.T."/>
            <person name="Ploos van Amstel J.K."/>
            <person name="Berger R."/>
        </authorList>
    </citation>
    <scope>VARIANTS TYRSN1 ASP-158; LEU-261; SER-366 DEL AND HIS-405</scope>
</reference>
<reference key="25">
    <citation type="journal article" date="2000" name="J. Inherit. Metab. Dis.">
        <title>Hepatocellular carcinoma despite long-term survival in chronic tyrosinaemia I.</title>
        <authorList>
            <person name="Kim S.Z."/>
            <person name="Kupke K.G."/>
            <person name="Ierardi-Curto L."/>
            <person name="Holme E."/>
            <person name="Greter J."/>
            <person name="Tanguay R.M."/>
            <person name="Poudrier J."/>
            <person name="D'Astous M."/>
            <person name="Lettre F."/>
            <person name="Hahn S.H."/>
            <person name="Levy H.L."/>
        </authorList>
    </citation>
    <scope>VARIANT TYRSN1 ARG-279</scope>
</reference>
<reference key="26">
    <citation type="journal article" date="2001" name="BMC Genet.">
        <title>A missense mutation (Q279R) in the fumarylacetoacetate hydrolase gene, responsible for hereditary tyrosinemia, acts as a splicing mutation.</title>
        <authorList>
            <person name="Dreumont N."/>
            <person name="Poudrier J.A."/>
            <person name="Bergeron A."/>
            <person name="Levy H.L."/>
            <person name="Baklouti F."/>
            <person name="Tanguay R.M."/>
        </authorList>
    </citation>
    <scope>VARIANT TYRSN1 ARG-279</scope>
</reference>
<reference key="27">
    <citation type="journal article" date="2001" name="J. Biol. Chem.">
        <title>Structural and functional analysis of missense mutations in fumarylacetoacetate hydrolase, the gene deficient in hereditary tyrosinemia type 1.</title>
        <authorList>
            <person name="Bergeron A."/>
            <person name="D'Astous M."/>
            <person name="Timm D.E."/>
            <person name="Tanguay R.M."/>
        </authorList>
    </citation>
    <scope>CHARACTERIZATION OF VARIANTS TYRSN1 ILE-16; CYS-62; ASP-134; ARG-193; VAL-233; GLY-234 AND ARG-279</scope>
    <scope>CHARACTERIZATION OF VARIANT TRP-341</scope>
</reference>
<reference key="28">
    <citation type="journal article" date="2009" name="Orphanet J. Rare Dis.">
        <title>A novel mutation causing mild, atypical fumarylacetoacetase deficiency (Tyrosinemia type I): a case report.</title>
        <authorList>
            <person name="Cassiman D."/>
            <person name="Zeevaert R."/>
            <person name="Holme E."/>
            <person name="Kvittingen E.A."/>
            <person name="Jaeken J."/>
        </authorList>
    </citation>
    <scope>VARIANT TYRSN1 THR-35</scope>
</reference>
<reference key="29">
    <citation type="journal article" date="2016" name="Nature">
        <title>Analysis of protein-coding genetic variation in 60,706 humans.</title>
        <authorList>
            <consortium name="Exome Aggregation Consortium"/>
            <person name="Lek M."/>
            <person name="Karczewski K.J."/>
            <person name="Minikel E.V."/>
            <person name="Samocha K.E."/>
            <person name="Banks E."/>
            <person name="Fennell T."/>
            <person name="O'Donnell-Luria A.H."/>
            <person name="Ware J.S."/>
            <person name="Hill A.J."/>
            <person name="Cummings B.B."/>
            <person name="Tukiainen T."/>
            <person name="Birnbaum D.P."/>
            <person name="Kosmicki J.A."/>
            <person name="Duncan L.E."/>
            <person name="Estrada K."/>
            <person name="Zhao F."/>
            <person name="Zou J."/>
            <person name="Pierce-Hoffman E."/>
            <person name="Berghout J."/>
            <person name="Cooper D.N."/>
            <person name="Deflaux N."/>
            <person name="DePristo M."/>
            <person name="Do R."/>
            <person name="Flannick J."/>
            <person name="Fromer M."/>
            <person name="Gauthier L."/>
            <person name="Goldstein J."/>
            <person name="Gupta N."/>
            <person name="Howrigan D."/>
            <person name="Kiezun A."/>
            <person name="Kurki M.I."/>
            <person name="Moonshine A.L."/>
            <person name="Natarajan P."/>
            <person name="Orozco L."/>
            <person name="Peloso G.M."/>
            <person name="Poplin R."/>
            <person name="Rivas M.A."/>
            <person name="Ruano-Rubio V."/>
            <person name="Rose S.A."/>
            <person name="Ruderfer D.M."/>
            <person name="Shakir K."/>
            <person name="Stenson P.D."/>
            <person name="Stevens C."/>
            <person name="Thomas B.P."/>
            <person name="Tiao G."/>
            <person name="Tusie-Luna M.T."/>
            <person name="Weisburd B."/>
            <person name="Won H.H."/>
            <person name="Yu D."/>
            <person name="Altshuler D.M."/>
            <person name="Ardissino D."/>
            <person name="Boehnke M."/>
            <person name="Danesh J."/>
            <person name="Donnelly S."/>
            <person name="Elosua R."/>
            <person name="Florez J.C."/>
            <person name="Gabriel S.B."/>
            <person name="Getz G."/>
            <person name="Glatt S.J."/>
            <person name="Hultman C.M."/>
            <person name="Kathiresan S."/>
            <person name="Laakso M."/>
            <person name="McCarroll S."/>
            <person name="McCarthy M.I."/>
            <person name="McGovern D."/>
            <person name="McPherson R."/>
            <person name="Neale B.M."/>
            <person name="Palotie A."/>
            <person name="Purcell S.M."/>
            <person name="Saleheen D."/>
            <person name="Scharf J.M."/>
            <person name="Sklar P."/>
            <person name="Sullivan P.F."/>
            <person name="Tuomilehto J."/>
            <person name="Tsuang M.T."/>
            <person name="Watkins H.C."/>
            <person name="Wilson J.G."/>
            <person name="Daly M.J."/>
            <person name="MacArthur D.G."/>
        </authorList>
    </citation>
    <scope>VARIANT TRP-341</scope>
</reference>
<comment type="catalytic activity">
    <reaction evidence="1">
        <text>4-fumarylacetoacetate + H2O = acetoacetate + fumarate + H(+)</text>
        <dbReference type="Rhea" id="RHEA:10244"/>
        <dbReference type="ChEBI" id="CHEBI:13705"/>
        <dbReference type="ChEBI" id="CHEBI:15377"/>
        <dbReference type="ChEBI" id="CHEBI:15378"/>
        <dbReference type="ChEBI" id="CHEBI:18034"/>
        <dbReference type="ChEBI" id="CHEBI:29806"/>
        <dbReference type="EC" id="3.7.1.2"/>
    </reaction>
</comment>
<comment type="cofactor">
    <cofactor evidence="1">
        <name>Ca(2+)</name>
        <dbReference type="ChEBI" id="CHEBI:29108"/>
    </cofactor>
</comment>
<comment type="cofactor">
    <cofactor evidence="1">
        <name>Mg(2+)</name>
        <dbReference type="ChEBI" id="CHEBI:18420"/>
    </cofactor>
</comment>
<comment type="pathway">
    <text>Amino-acid degradation; L-phenylalanine degradation; acetoacetate and fumarate from L-phenylalanine: step 6/6.</text>
</comment>
<comment type="subunit">
    <text evidence="1">Homodimer.</text>
</comment>
<comment type="interaction">
    <interactant intactId="EBI-4397076">
        <id>P16930</id>
    </interactant>
    <interactant intactId="EBI-10173507">
        <id>Q6UY14-3</id>
        <label>ADAMTSL4</label>
    </interactant>
    <organismsDiffer>false</organismsDiffer>
    <experiments>3</experiments>
</comment>
<comment type="interaction">
    <interactant intactId="EBI-4397076">
        <id>P16930</id>
    </interactant>
    <interactant intactId="EBI-12593838">
        <id>Q6WN34-2</id>
        <label>CHRDL2</label>
    </interactant>
    <organismsDiffer>false</organismsDiffer>
    <experiments>3</experiments>
</comment>
<comment type="interaction">
    <interactant intactId="EBI-4397076">
        <id>P16930</id>
    </interactant>
    <interactant intactId="EBI-10171774">
        <id>P60410</id>
        <label>KRTAP10-8</label>
    </interactant>
    <organismsDiffer>false</organismsDiffer>
    <experiments>3</experiments>
</comment>
<comment type="interaction">
    <interactant intactId="EBI-4397076">
        <id>P16930</id>
    </interactant>
    <interactant intactId="EBI-10241252">
        <id>Q3SY46</id>
        <label>KRTAP13-3</label>
    </interactant>
    <organismsDiffer>false</organismsDiffer>
    <experiments>3</experiments>
</comment>
<comment type="interaction">
    <interactant intactId="EBI-4397076">
        <id>P16930</id>
    </interactant>
    <interactant intactId="EBI-3958099">
        <id>P26371</id>
        <label>KRTAP5-9</label>
    </interactant>
    <organismsDiffer>false</organismsDiffer>
    <experiments>3</experiments>
</comment>
<comment type="interaction">
    <interactant intactId="EBI-4397076">
        <id>P16930</id>
    </interactant>
    <interactant intactId="EBI-742388">
        <id>Q9H8W4</id>
        <label>PLEKHF2</label>
    </interactant>
    <organismsDiffer>false</organismsDiffer>
    <experiments>3</experiments>
</comment>
<comment type="interaction">
    <interactant intactId="EBI-4397076">
        <id>P16930</id>
    </interactant>
    <interactant intactId="EBI-2826300">
        <id>Q53GC0</id>
        <label>SERTAD1</label>
    </interactant>
    <organismsDiffer>false</organismsDiffer>
    <experiments>3</experiments>
</comment>
<comment type="interaction">
    <interactant intactId="EBI-4397076">
        <id>P16930</id>
    </interactant>
    <interactant intactId="EBI-533224">
        <id>P15884</id>
        <label>TCF4</label>
    </interactant>
    <organismsDiffer>false</organismsDiffer>
    <experiments>3</experiments>
</comment>
<comment type="alternative products">
    <event type="alternative splicing"/>
    <isoform>
        <id>P16930-1</id>
        <name>1</name>
        <sequence type="displayed"/>
    </isoform>
    <isoform>
        <id>P16930-2</id>
        <name>2</name>
        <sequence type="described" ref="VSP_055491"/>
    </isoform>
</comment>
<comment type="tissue specificity">
    <text>Mainly expressed in liver and kidney. Lower levels are also detected in many other tissues.</text>
</comment>
<comment type="disease" evidence="2 3 4 5 6 8 9 10 11 12 13 14 15 16 17 18">
    <disease id="DI-01107">
        <name>Tyrosinemia 1</name>
        <acronym>TYRSN1</acronym>
        <description>An inborn error of metabolism characterized by elevations of tyrosine in the blood and urine, and hepatorenal manifestations. Typical features include hepatic necrosis, renal tubular injury, episodic weakness, self-mutilation, and seizures. Renal tubular dysfunction is associated with phosphate loss and hypophosphataemic rickets. Progressive liver disease can lead to the development of hepatocellular carcinoma. Dietary treatment with restriction of tyrosine and phenylalanine alleviates the rickets, but liver transplantation has so far been the only definite treatment.</description>
        <dbReference type="MIM" id="276700"/>
    </disease>
    <text>The disease is caused by variants affecting the gene represented in this entry.</text>
</comment>
<comment type="similarity">
    <text evidence="21">Belongs to the FAH family.</text>
</comment>
<sequence length="419" mass="46374">MSFIPVAEDSDFPIHNLPYGVFSTRGDPRPRIGVAIGDQILDLSIIKHLFTGPVLSKHQDVFNQPTLNSFMGLGQAAWKEARVFLQNLLSVSQARLRDDTELRKCAFISQASATMHLPATIGDYTDFYSSRQHATNVGIMFRDKENALMPNWLHLPVGYHGRASSVVVSGTPIRRPMGQMKPDDSKPPVYGACKLLDMELEMAFFVGPGNRLGEPIPISKAHEHIFGMVLMNDWSARDIQKWEYVPLGPFLGKSFGTTVSPWVVPMDALMPFAVPNPKQDPRPLPYLCHDEPYTFDINLSVNLKGEGMSQAATICKSNFKYMYWTMLQQLTHHSVNGCNLRPGDLLASGTISGPEPENFGSMLELSWKGTKPIDLGNGQTRKFLLDGDEVIITGYCQGDGYRIGFGQCAGKVLPALLPS</sequence>
<protein>
    <recommendedName>
        <fullName>Fumarylacetoacetase</fullName>
        <shortName>FAA</shortName>
        <ecNumber evidence="1">3.7.1.2</ecNumber>
    </recommendedName>
    <alternativeName>
        <fullName>Beta-diketonase</fullName>
    </alternativeName>
    <alternativeName>
        <fullName>Fumarylacetoacetate hydrolase</fullName>
    </alternativeName>
</protein>
<dbReference type="EC" id="3.7.1.2" evidence="1"/>
<dbReference type="EMBL" id="M55150">
    <property type="protein sequence ID" value="AAA52422.1"/>
    <property type="molecule type" value="mRNA"/>
</dbReference>
<dbReference type="EMBL" id="BT007160">
    <property type="protein sequence ID" value="AAP35824.1"/>
    <property type="molecule type" value="mRNA"/>
</dbReference>
<dbReference type="EMBL" id="AK313951">
    <property type="protein sequence ID" value="BAG36668.1"/>
    <property type="molecule type" value="mRNA"/>
</dbReference>
<dbReference type="EMBL" id="BX537608">
    <property type="protein sequence ID" value="CAD97795.1"/>
    <property type="molecule type" value="mRNA"/>
</dbReference>
<dbReference type="EMBL" id="AC087761">
    <property type="status" value="NOT_ANNOTATED_CDS"/>
    <property type="molecule type" value="Genomic_DNA"/>
</dbReference>
<dbReference type="EMBL" id="CH471136">
    <property type="protein sequence ID" value="EAW99120.1"/>
    <property type="molecule type" value="Genomic_DNA"/>
</dbReference>
<dbReference type="EMBL" id="CH471136">
    <property type="protein sequence ID" value="EAW99121.1"/>
    <property type="molecule type" value="Genomic_DNA"/>
</dbReference>
<dbReference type="EMBL" id="BC002527">
    <property type="protein sequence ID" value="AAH02527.1"/>
    <property type="molecule type" value="mRNA"/>
</dbReference>
<dbReference type="EMBL" id="X51728">
    <property type="protein sequence ID" value="CAA36016.1"/>
    <property type="molecule type" value="mRNA"/>
</dbReference>
<dbReference type="CCDS" id="CCDS10314.1">
    <molecule id="P16930-1"/>
</dbReference>
<dbReference type="PIR" id="A37926">
    <property type="entry name" value="A37926"/>
</dbReference>
<dbReference type="RefSeq" id="NP_000128.1">
    <molecule id="P16930-1"/>
    <property type="nucleotide sequence ID" value="NM_000137.4"/>
</dbReference>
<dbReference type="RefSeq" id="NP_001361306.1">
    <molecule id="P16930-1"/>
    <property type="nucleotide sequence ID" value="NM_001374377.1"/>
</dbReference>
<dbReference type="RefSeq" id="NP_001361309.1">
    <molecule id="P16930-1"/>
    <property type="nucleotide sequence ID" value="NM_001374380.1"/>
</dbReference>
<dbReference type="SMR" id="P16930"/>
<dbReference type="BioGRID" id="108479">
    <property type="interactions" value="22"/>
</dbReference>
<dbReference type="FunCoup" id="P16930">
    <property type="interactions" value="405"/>
</dbReference>
<dbReference type="IntAct" id="P16930">
    <property type="interactions" value="9"/>
</dbReference>
<dbReference type="STRING" id="9606.ENSP00000385080"/>
<dbReference type="DrugBank" id="DB01832">
    <property type="generic name" value="4-[Hydroxy-[Methyl-Phosphinoyl]]-3-Oxo-Butanoic Acid"/>
</dbReference>
<dbReference type="DrugBank" id="DB01762">
    <property type="generic name" value="Acetoacetic acid"/>
</dbReference>
<dbReference type="DrugBank" id="DB01677">
    <property type="generic name" value="Fumaric acid"/>
</dbReference>
<dbReference type="GlyGen" id="P16930">
    <property type="glycosylation" value="1 site, 1 O-linked glycan (1 site)"/>
</dbReference>
<dbReference type="iPTMnet" id="P16930"/>
<dbReference type="MetOSite" id="P16930"/>
<dbReference type="PhosphoSitePlus" id="P16930"/>
<dbReference type="SwissPalm" id="P16930"/>
<dbReference type="BioMuta" id="FAH"/>
<dbReference type="DMDM" id="119778"/>
<dbReference type="OGP" id="P16930"/>
<dbReference type="REPRODUCTION-2DPAGE" id="IPI00031708"/>
<dbReference type="jPOST" id="P16930"/>
<dbReference type="MassIVE" id="P16930"/>
<dbReference type="PaxDb" id="9606-ENSP00000385080"/>
<dbReference type="PeptideAtlas" id="P16930"/>
<dbReference type="ProteomicsDB" id="53401">
    <molecule id="P16930-1"/>
</dbReference>
<dbReference type="ProteomicsDB" id="62555"/>
<dbReference type="Pumba" id="P16930"/>
<dbReference type="Antibodypedia" id="27851">
    <property type="antibodies" value="304 antibodies from 29 providers"/>
</dbReference>
<dbReference type="DNASU" id="2184"/>
<dbReference type="Ensembl" id="ENST00000261755.9">
    <molecule id="P16930-1"/>
    <property type="protein sequence ID" value="ENSP00000261755.5"/>
    <property type="gene ID" value="ENSG00000103876.14"/>
</dbReference>
<dbReference type="Ensembl" id="ENST00000407106.5">
    <molecule id="P16930-1"/>
    <property type="protein sequence ID" value="ENSP00000385080.1"/>
    <property type="gene ID" value="ENSG00000103876.14"/>
</dbReference>
<dbReference type="Ensembl" id="ENST00000561421.6">
    <molecule id="P16930-1"/>
    <property type="protein sequence ID" value="ENSP00000453347.2"/>
    <property type="gene ID" value="ENSG00000103876.14"/>
</dbReference>
<dbReference type="GeneID" id="2184"/>
<dbReference type="KEGG" id="hsa:2184"/>
<dbReference type="MANE-Select" id="ENST00000561421.6">
    <property type="protein sequence ID" value="ENSP00000453347.2"/>
    <property type="RefSeq nucleotide sequence ID" value="NM_000137.4"/>
    <property type="RefSeq protein sequence ID" value="NP_000128.1"/>
</dbReference>
<dbReference type="UCSC" id="uc002bfm.3">
    <molecule id="P16930-1"/>
    <property type="organism name" value="human"/>
</dbReference>
<dbReference type="AGR" id="HGNC:3579"/>
<dbReference type="CTD" id="2184"/>
<dbReference type="DisGeNET" id="2184"/>
<dbReference type="GeneCards" id="FAH"/>
<dbReference type="GeneReviews" id="FAH"/>
<dbReference type="HGNC" id="HGNC:3579">
    <property type="gene designation" value="FAH"/>
</dbReference>
<dbReference type="HPA" id="ENSG00000103876">
    <property type="expression patterns" value="Tissue enhanced (liver)"/>
</dbReference>
<dbReference type="MalaCards" id="FAH"/>
<dbReference type="MIM" id="276700">
    <property type="type" value="phenotype"/>
</dbReference>
<dbReference type="MIM" id="613871">
    <property type="type" value="gene"/>
</dbReference>
<dbReference type="neXtProt" id="NX_P16930"/>
<dbReference type="OpenTargets" id="ENSG00000103876"/>
<dbReference type="Orphanet" id="882">
    <property type="disease" value="Tyrosinemia type 1"/>
</dbReference>
<dbReference type="PharmGKB" id="PA27977"/>
<dbReference type="VEuPathDB" id="HostDB:ENSG00000103876"/>
<dbReference type="eggNOG" id="KOG2843">
    <property type="taxonomic scope" value="Eukaryota"/>
</dbReference>
<dbReference type="GeneTree" id="ENSGT00390000008646"/>
<dbReference type="HOGENOM" id="CLU_026207_2_0_1"/>
<dbReference type="InParanoid" id="P16930"/>
<dbReference type="OMA" id="YWTAAQQ"/>
<dbReference type="OrthoDB" id="9971669at2759"/>
<dbReference type="PAN-GO" id="P16930">
    <property type="GO annotations" value="4 GO annotations based on evolutionary models"/>
</dbReference>
<dbReference type="PhylomeDB" id="P16930"/>
<dbReference type="TreeFam" id="TF315211"/>
<dbReference type="BioCyc" id="MetaCyc:HS02536-MONOMER"/>
<dbReference type="BRENDA" id="3.7.1.2">
    <property type="organism ID" value="2681"/>
</dbReference>
<dbReference type="PathwayCommons" id="P16930"/>
<dbReference type="Reactome" id="R-HSA-8963684">
    <property type="pathway name" value="Tyrosine catabolism"/>
</dbReference>
<dbReference type="SignaLink" id="P16930"/>
<dbReference type="UniPathway" id="UPA00139">
    <property type="reaction ID" value="UER00341"/>
</dbReference>
<dbReference type="BioGRID-ORCS" id="2184">
    <property type="hits" value="12 hits in 1164 CRISPR screens"/>
</dbReference>
<dbReference type="ChiTaRS" id="FAH">
    <property type="organism name" value="human"/>
</dbReference>
<dbReference type="GeneWiki" id="Fumarylacetoacetate_hydrolase"/>
<dbReference type="GenomeRNAi" id="2184"/>
<dbReference type="Pharos" id="P16930">
    <property type="development level" value="Tbio"/>
</dbReference>
<dbReference type="PRO" id="PR:P16930"/>
<dbReference type="Proteomes" id="UP000005640">
    <property type="component" value="Chromosome 15"/>
</dbReference>
<dbReference type="RNAct" id="P16930">
    <property type="molecule type" value="protein"/>
</dbReference>
<dbReference type="Bgee" id="ENSG00000103876">
    <property type="expression patterns" value="Expressed in right lobe of liver and 182 other cell types or tissues"/>
</dbReference>
<dbReference type="ExpressionAtlas" id="P16930">
    <property type="expression patterns" value="baseline and differential"/>
</dbReference>
<dbReference type="GO" id="GO:0005829">
    <property type="term" value="C:cytosol"/>
    <property type="evidence" value="ECO:0000304"/>
    <property type="project" value="Reactome"/>
</dbReference>
<dbReference type="GO" id="GO:0070062">
    <property type="term" value="C:extracellular exosome"/>
    <property type="evidence" value="ECO:0007005"/>
    <property type="project" value="UniProtKB"/>
</dbReference>
<dbReference type="GO" id="GO:0004334">
    <property type="term" value="F:fumarylacetoacetase activity"/>
    <property type="evidence" value="ECO:0000318"/>
    <property type="project" value="GO_Central"/>
</dbReference>
<dbReference type="GO" id="GO:0046872">
    <property type="term" value="F:metal ion binding"/>
    <property type="evidence" value="ECO:0007669"/>
    <property type="project" value="UniProtKB-KW"/>
</dbReference>
<dbReference type="GO" id="GO:0006527">
    <property type="term" value="P:arginine catabolic process"/>
    <property type="evidence" value="ECO:0007669"/>
    <property type="project" value="Ensembl"/>
</dbReference>
<dbReference type="GO" id="GO:1902000">
    <property type="term" value="P:homogentisate catabolic process"/>
    <property type="evidence" value="ECO:0000318"/>
    <property type="project" value="GO_Central"/>
</dbReference>
<dbReference type="GO" id="GO:0006559">
    <property type="term" value="P:L-phenylalanine catabolic process"/>
    <property type="evidence" value="ECO:0000318"/>
    <property type="project" value="GO_Central"/>
</dbReference>
<dbReference type="GO" id="GO:0006629">
    <property type="term" value="P:lipid metabolic process"/>
    <property type="evidence" value="ECO:0007669"/>
    <property type="project" value="UniProtKB-KW"/>
</dbReference>
<dbReference type="GO" id="GO:0006572">
    <property type="term" value="P:tyrosine catabolic process"/>
    <property type="evidence" value="ECO:0000318"/>
    <property type="project" value="GO_Central"/>
</dbReference>
<dbReference type="FunFam" id="2.30.30.230:FF:000001">
    <property type="entry name" value="Fumarylacetoacetase"/>
    <property type="match status" value="1"/>
</dbReference>
<dbReference type="FunFam" id="3.90.850.10:FF:000004">
    <property type="entry name" value="Fumarylacetoacetase"/>
    <property type="match status" value="1"/>
</dbReference>
<dbReference type="Gene3D" id="2.30.30.230">
    <property type="entry name" value="Fumarylacetoacetase, N-terminal domain"/>
    <property type="match status" value="1"/>
</dbReference>
<dbReference type="Gene3D" id="3.90.850.10">
    <property type="entry name" value="Fumarylacetoacetase-like, C-terminal domain"/>
    <property type="match status" value="1"/>
</dbReference>
<dbReference type="InterPro" id="IPR005959">
    <property type="entry name" value="Fumarylacetoacetase"/>
</dbReference>
<dbReference type="InterPro" id="IPR011234">
    <property type="entry name" value="Fumarylacetoacetase-like_C"/>
</dbReference>
<dbReference type="InterPro" id="IPR036663">
    <property type="entry name" value="Fumarylacetoacetase_C_sf"/>
</dbReference>
<dbReference type="InterPro" id="IPR015377">
    <property type="entry name" value="Fumarylacetoacetase_N"/>
</dbReference>
<dbReference type="InterPro" id="IPR036462">
    <property type="entry name" value="Fumarylacetoacetase_N_sf"/>
</dbReference>
<dbReference type="NCBIfam" id="TIGR01266">
    <property type="entry name" value="fum_ac_acetase"/>
    <property type="match status" value="1"/>
</dbReference>
<dbReference type="PANTHER" id="PTHR43069">
    <property type="entry name" value="FUMARYLACETOACETASE"/>
    <property type="match status" value="1"/>
</dbReference>
<dbReference type="PANTHER" id="PTHR43069:SF2">
    <property type="entry name" value="FUMARYLACETOACETASE"/>
    <property type="match status" value="1"/>
</dbReference>
<dbReference type="Pfam" id="PF01557">
    <property type="entry name" value="FAA_hydrolase"/>
    <property type="match status" value="1"/>
</dbReference>
<dbReference type="Pfam" id="PF09298">
    <property type="entry name" value="FAA_hydrolase_N"/>
    <property type="match status" value="1"/>
</dbReference>
<dbReference type="SUPFAM" id="SSF56529">
    <property type="entry name" value="FAH"/>
    <property type="match status" value="1"/>
</dbReference>
<dbReference type="SUPFAM" id="SSF63433">
    <property type="entry name" value="Fumarylacetoacetate hydrolase, FAH, N-terminal domain"/>
    <property type="match status" value="1"/>
</dbReference>
<keyword id="KW-0007">Acetylation</keyword>
<keyword id="KW-0025">Alternative splicing</keyword>
<keyword id="KW-0106">Calcium</keyword>
<keyword id="KW-0903">Direct protein sequencing</keyword>
<keyword id="KW-0225">Disease variant</keyword>
<keyword id="KW-0378">Hydrolase</keyword>
<keyword id="KW-0443">Lipid metabolism</keyword>
<keyword id="KW-0460">Magnesium</keyword>
<keyword id="KW-0479">Metal-binding</keyword>
<keyword id="KW-0585">Phenylalanine catabolism</keyword>
<keyword id="KW-0597">Phosphoprotein</keyword>
<keyword id="KW-1267">Proteomics identification</keyword>
<keyword id="KW-1185">Reference proteome</keyword>
<keyword id="KW-0828">Tyrosine catabolism</keyword>